<reference key="1">
    <citation type="journal article" date="1993" name="Gene">
        <title>The cloning and sequencing of the genes encoding phytase (phy) and pH 2.5-optimum acid phosphatase (aph) from Aspergillus niger var. awamori.</title>
        <authorList>
            <person name="Piddington C.S."/>
            <person name="Houston C.S."/>
            <person name="Paloheimo M.T."/>
            <person name="Cantrell M.A."/>
            <person name="Miettinen-Oinonen A."/>
            <person name="Nevalainen H."/>
            <person name="Rambosek J.A."/>
        </authorList>
    </citation>
    <scope>NUCLEOTIDE SEQUENCE [GENOMIC DNA]</scope>
    <source>
        <strain>ALK0243</strain>
    </source>
</reference>
<reference key="2">
    <citation type="journal article" date="1999" name="J. Mol. Biol.">
        <title>Crystal structure of Aspergillus niger pH 2.5 acid phosphatase at 2.4-A resolution.</title>
        <authorList>
            <person name="Kostrewa D."/>
            <person name="Wyss M."/>
            <person name="D'Arcy A."/>
            <person name="van Loon A.P.G.M."/>
        </authorList>
    </citation>
    <scope>X-RAY CRYSTALLOGRAPHY (2.4 ANGSTROMS)</scope>
</reference>
<keyword id="KW-0002">3D-structure</keyword>
<keyword id="KW-1015">Disulfide bond</keyword>
<keyword id="KW-0325">Glycoprotein</keyword>
<keyword id="KW-0378">Hydrolase</keyword>
<keyword id="KW-0732">Signal</keyword>
<evidence type="ECO:0000250" key="1"/>
<evidence type="ECO:0000305" key="2"/>
<evidence type="ECO:0007829" key="3">
    <source>
        <dbReference type="PDB" id="1QFX"/>
    </source>
</evidence>
<gene>
    <name type="primary">phyB</name>
    <name type="synonym">aph</name>
</gene>
<protein>
    <recommendedName>
        <fullName>3-phytase B</fullName>
        <ecNumber>3.1.3.8</ecNumber>
    </recommendedName>
    <alternativeName>
        <fullName>Myo-inositol-hexaphosphate 3-phosphohydrolase B</fullName>
    </alternativeName>
    <alternativeName>
        <fullName>pH 2.5 optimum acid phosphatase</fullName>
    </alternativeName>
</protein>
<name>PHYB_ASPAW</name>
<comment type="function">
    <text>Catalyzes the hydrolysis of inorganic orthophosphate from phytate.</text>
</comment>
<comment type="catalytic activity">
    <reaction>
        <text>1D-myo-inositol hexakisphosphate + H2O = 1D-myo-inositol 1,2,4,5,6-pentakisphosphate + phosphate</text>
        <dbReference type="Rhea" id="RHEA:16989"/>
        <dbReference type="ChEBI" id="CHEBI:15377"/>
        <dbReference type="ChEBI" id="CHEBI:43474"/>
        <dbReference type="ChEBI" id="CHEBI:57798"/>
        <dbReference type="ChEBI" id="CHEBI:58130"/>
        <dbReference type="EC" id="3.1.3.8"/>
    </reaction>
</comment>
<comment type="subunit">
    <text>Homodimer.</text>
</comment>
<comment type="similarity">
    <text evidence="2">Belongs to the histidine acid phosphatase family.</text>
</comment>
<sequence length="479" mass="52678">MPRTSLLTLACALATGASAFSYGAAIPQSTQEKQFSQEFRDGYSILKHYGGNGPYSERVSYGIARDPPTSCEVDQVIMVKRHGERYPSPSAGKDIEEALAKVYSINTTEYKGDLAFLNDWTYYVPNECYYNAETTSGPYAGLLDAYNHGNDYKARYGHLWNGETVVPFFSSGYGRVIETARKFGEGFFGYNYSTNAALNIISESEVMGADSLTPTCDTDNDQTTCDNLTYQLPQFKVAAARLNSQNPGMNLTASDVYNLMVMASFELNARPFSNWINAFTQDEWVSFGYVEDLNYYYCAGPGDKNMAAVGAVYANASLTLLNQGPKEAGSLFFNFAHDTNITPILAALGVLIPNEDLPLDRVAFGNPYSIGNIVPMGGHLTIERLSCQATALSDEGTYVRLVLNEAVLPFNDCTSGPGYSCPLANYTSILNKNLPDYTTTCNVSASYPQYLSFWWNYNTTTELNYRSSPIACQEGDAMD</sequence>
<feature type="signal peptide" evidence="1">
    <location>
        <begin position="1"/>
        <end position="19"/>
    </location>
</feature>
<feature type="chain" id="PRO_0000023975" description="3-phytase B">
    <location>
        <begin position="20"/>
        <end position="479"/>
    </location>
</feature>
<feature type="active site" description="Nucleophile">
    <location>
        <position position="82"/>
    </location>
</feature>
<feature type="active site" description="Proton donor">
    <location>
        <position position="338"/>
    </location>
</feature>
<feature type="glycosylation site" description="N-linked (GlcNAc...) asparagine">
    <location>
        <position position="191"/>
    </location>
</feature>
<feature type="glycosylation site" description="N-linked (GlcNAc...) asparagine">
    <location>
        <position position="315"/>
    </location>
</feature>
<feature type="glycosylation site" description="N-linked (GlcNAc...) asparagine">
    <location>
        <position position="458"/>
    </location>
</feature>
<feature type="disulfide bond">
    <location>
        <begin position="71"/>
        <end position="387"/>
    </location>
</feature>
<feature type="disulfide bond">
    <location>
        <begin position="128"/>
        <end position="472"/>
    </location>
</feature>
<feature type="disulfide bond">
    <location>
        <begin position="216"/>
        <end position="441"/>
    </location>
</feature>
<feature type="disulfide bond">
    <location>
        <begin position="225"/>
        <end position="298"/>
    </location>
</feature>
<feature type="disulfide bond">
    <location>
        <begin position="413"/>
        <end position="421"/>
    </location>
</feature>
<feature type="helix" evidence="3">
    <location>
        <begin position="41"/>
        <end position="43"/>
    </location>
</feature>
<feature type="helix" evidence="3">
    <location>
        <begin position="45"/>
        <end position="47"/>
    </location>
</feature>
<feature type="strand" evidence="3">
    <location>
        <begin position="71"/>
        <end position="81"/>
    </location>
</feature>
<feature type="helix" evidence="3">
    <location>
        <begin position="89"/>
        <end position="103"/>
    </location>
</feature>
<feature type="helix" evidence="3">
    <location>
        <begin position="112"/>
        <end position="119"/>
    </location>
</feature>
<feature type="helix" evidence="3">
    <location>
        <begin position="127"/>
        <end position="129"/>
    </location>
</feature>
<feature type="helix" evidence="3">
    <location>
        <begin position="141"/>
        <end position="156"/>
    </location>
</feature>
<feature type="helix" evidence="3">
    <location>
        <begin position="157"/>
        <end position="159"/>
    </location>
</feature>
<feature type="strand" evidence="3">
    <location>
        <begin position="162"/>
        <end position="164"/>
    </location>
</feature>
<feature type="strand" evidence="3">
    <location>
        <begin position="166"/>
        <end position="173"/>
    </location>
</feature>
<feature type="helix" evidence="3">
    <location>
        <begin position="174"/>
        <end position="188"/>
    </location>
</feature>
<feature type="helix" evidence="3">
    <location>
        <begin position="189"/>
        <end position="191"/>
    </location>
</feature>
<feature type="helix" evidence="3">
    <location>
        <begin position="192"/>
        <end position="195"/>
    </location>
</feature>
<feature type="strand" evidence="3">
    <location>
        <begin position="196"/>
        <end position="201"/>
    </location>
</feature>
<feature type="helix" evidence="3">
    <location>
        <begin position="205"/>
        <end position="207"/>
    </location>
</feature>
<feature type="strand" evidence="3">
    <location>
        <begin position="210"/>
        <end position="213"/>
    </location>
</feature>
<feature type="turn" evidence="3">
    <location>
        <begin position="224"/>
        <end position="227"/>
    </location>
</feature>
<feature type="helix" evidence="3">
    <location>
        <begin position="234"/>
        <end position="245"/>
    </location>
</feature>
<feature type="helix" evidence="3">
    <location>
        <begin position="253"/>
        <end position="266"/>
    </location>
</feature>
<feature type="turn" evidence="3">
    <location>
        <begin position="267"/>
        <end position="269"/>
    </location>
</feature>
<feature type="helix" evidence="3">
    <location>
        <begin position="276"/>
        <end position="278"/>
    </location>
</feature>
<feature type="helix" evidence="3">
    <location>
        <begin position="281"/>
        <end position="298"/>
    </location>
</feature>
<feature type="helix" evidence="3">
    <location>
        <begin position="306"/>
        <end position="323"/>
    </location>
</feature>
<feature type="helix" evidence="3">
    <location>
        <begin position="325"/>
        <end position="328"/>
    </location>
</feature>
<feature type="strand" evidence="3">
    <location>
        <begin position="330"/>
        <end position="336"/>
    </location>
</feature>
<feature type="helix" evidence="3">
    <location>
        <begin position="338"/>
        <end position="348"/>
    </location>
</feature>
<feature type="strand" evidence="3">
    <location>
        <begin position="359"/>
        <end position="361"/>
    </location>
</feature>
<feature type="helix" evidence="3">
    <location>
        <begin position="370"/>
        <end position="372"/>
    </location>
</feature>
<feature type="strand" evidence="3">
    <location>
        <begin position="379"/>
        <end position="387"/>
    </location>
</feature>
<feature type="strand" evidence="3">
    <location>
        <begin position="395"/>
        <end position="403"/>
    </location>
</feature>
<feature type="strand" evidence="3">
    <location>
        <begin position="406"/>
        <end position="408"/>
    </location>
</feature>
<feature type="helix" evidence="3">
    <location>
        <begin position="417"/>
        <end position="419"/>
    </location>
</feature>
<feature type="helix" evidence="3">
    <location>
        <begin position="423"/>
        <end position="433"/>
    </location>
</feature>
<feature type="helix" evidence="3">
    <location>
        <begin position="437"/>
        <end position="440"/>
    </location>
</feature>
<feature type="turn" evidence="3">
    <location>
        <begin position="453"/>
        <end position="455"/>
    </location>
</feature>
<organism>
    <name type="scientific">Aspergillus awamori</name>
    <name type="common">Black koji mold</name>
    <dbReference type="NCBI Taxonomy" id="105351"/>
    <lineage>
        <taxon>Eukaryota</taxon>
        <taxon>Fungi</taxon>
        <taxon>Dikarya</taxon>
        <taxon>Ascomycota</taxon>
        <taxon>Pezizomycotina</taxon>
        <taxon>Eurotiomycetes</taxon>
        <taxon>Eurotiomycetidae</taxon>
        <taxon>Eurotiales</taxon>
        <taxon>Aspergillaceae</taxon>
        <taxon>Aspergillus</taxon>
    </lineage>
</organism>
<accession>P34755</accession>
<proteinExistence type="evidence at protein level"/>
<dbReference type="EC" id="3.1.3.8"/>
<dbReference type="EMBL" id="L02420">
    <property type="protein sequence ID" value="AAA16897.1"/>
    <property type="molecule type" value="Unassigned_DNA"/>
</dbReference>
<dbReference type="PIR" id="JN0890">
    <property type="entry name" value="JN0890"/>
</dbReference>
<dbReference type="PDB" id="1QFX">
    <property type="method" value="X-ray"/>
    <property type="resolution" value="2.40 A"/>
    <property type="chains" value="A/B=20-479"/>
</dbReference>
<dbReference type="PDBsum" id="1QFX"/>
<dbReference type="SMR" id="P34755"/>
<dbReference type="GlyCosmos" id="P34755">
    <property type="glycosylation" value="3 sites, No reported glycans"/>
</dbReference>
<dbReference type="EvolutionaryTrace" id="P34755"/>
<dbReference type="GO" id="GO:0009277">
    <property type="term" value="C:fungal-type cell wall"/>
    <property type="evidence" value="ECO:0007669"/>
    <property type="project" value="TreeGrafter"/>
</dbReference>
<dbReference type="GO" id="GO:0016158">
    <property type="term" value="F:3-phytase activity"/>
    <property type="evidence" value="ECO:0007669"/>
    <property type="project" value="UniProtKB-EC"/>
</dbReference>
<dbReference type="GO" id="GO:0003993">
    <property type="term" value="F:acid phosphatase activity"/>
    <property type="evidence" value="ECO:0007669"/>
    <property type="project" value="TreeGrafter"/>
</dbReference>
<dbReference type="CDD" id="cd07061">
    <property type="entry name" value="HP_HAP_like"/>
    <property type="match status" value="1"/>
</dbReference>
<dbReference type="FunFam" id="3.40.50.1240:FF:000042">
    <property type="entry name" value="Acid phosphatase aph, 3-phytase phyB"/>
    <property type="match status" value="1"/>
</dbReference>
<dbReference type="Gene3D" id="3.40.50.1240">
    <property type="entry name" value="Phosphoglycerate mutase-like"/>
    <property type="match status" value="3"/>
</dbReference>
<dbReference type="InterPro" id="IPR033379">
    <property type="entry name" value="Acid_Pase_AS"/>
</dbReference>
<dbReference type="InterPro" id="IPR000560">
    <property type="entry name" value="His_Pase_clade-2"/>
</dbReference>
<dbReference type="InterPro" id="IPR029033">
    <property type="entry name" value="His_PPase_superfam"/>
</dbReference>
<dbReference type="InterPro" id="IPR016274">
    <property type="entry name" value="Histidine_acid_Pase_euk"/>
</dbReference>
<dbReference type="PANTHER" id="PTHR20963:SF18">
    <property type="entry name" value="ACID PHOSPHATASE PHO11-RELATED"/>
    <property type="match status" value="1"/>
</dbReference>
<dbReference type="PANTHER" id="PTHR20963">
    <property type="entry name" value="MULTIPLE INOSITOL POLYPHOSPHATE PHOSPHATASE-RELATED"/>
    <property type="match status" value="1"/>
</dbReference>
<dbReference type="Pfam" id="PF00328">
    <property type="entry name" value="His_Phos_2"/>
    <property type="match status" value="1"/>
</dbReference>
<dbReference type="PIRSF" id="PIRSF000894">
    <property type="entry name" value="Acid_phosphatase"/>
    <property type="match status" value="1"/>
</dbReference>
<dbReference type="SUPFAM" id="SSF53254">
    <property type="entry name" value="Phosphoglycerate mutase-like"/>
    <property type="match status" value="1"/>
</dbReference>
<dbReference type="PROSITE" id="PS00616">
    <property type="entry name" value="HIS_ACID_PHOSPHAT_1"/>
    <property type="match status" value="1"/>
</dbReference>
<dbReference type="PROSITE" id="PS00778">
    <property type="entry name" value="HIS_ACID_PHOSPHAT_2"/>
    <property type="match status" value="1"/>
</dbReference>